<sequence length="378" mass="42734">MRLASQSAILVKVWTWNASRNAWKASGGIFDIPQKETRLKELERRLEDPSLWNDPEAARKVSQEAARLRRTVDTFRSLESDLQGLLELMEELPAEEREALKPELEEAAKKLDELYHQTLLNFPHAEKNAILTIQPGAGGTEACDWAEMLLRMYTRFAERQGFQVEVVDLTPGPEAGIDYAQILVKGENAYGLLSPEAGVHRLVRPSPFDASGRRHTSFAGVEVIPEVDEEVEVVLKPEELRIDVMRASGPGGQGVNTTDSAVRVVHLPTGITVTCQTTRSQIKNKELALKILKARLYELERKKREEELKALRGEVRPIEWGSQIRSYVLDKNYVKDHRTGLMRHDPENVLDGDLMDLIWAGLEWKAGRRQGTEEVEAE</sequence>
<feature type="chain" id="PRO_0000439755" description="Peptide chain release factor RF2">
    <location>
        <begin position="1"/>
        <end position="378"/>
    </location>
</feature>
<feature type="modified residue" description="N5-methylglutamine" evidence="11">
    <location>
        <position position="253"/>
    </location>
</feature>
<feature type="strand" evidence="18">
    <location>
        <begin position="29"/>
        <end position="31"/>
    </location>
</feature>
<feature type="helix" evidence="18">
    <location>
        <begin position="32"/>
        <end position="39"/>
    </location>
</feature>
<feature type="turn" evidence="18">
    <location>
        <begin position="40"/>
        <end position="44"/>
    </location>
</feature>
<feature type="helix" evidence="18">
    <location>
        <begin position="49"/>
        <end position="51"/>
    </location>
</feature>
<feature type="turn" evidence="18">
    <location>
        <begin position="52"/>
        <end position="54"/>
    </location>
</feature>
<feature type="helix" evidence="18">
    <location>
        <begin position="55"/>
        <end position="57"/>
    </location>
</feature>
<feature type="strand" evidence="18">
    <location>
        <begin position="58"/>
        <end position="60"/>
    </location>
</feature>
<feature type="helix" evidence="18">
    <location>
        <begin position="63"/>
        <end position="67"/>
    </location>
</feature>
<feature type="helix" evidence="18">
    <location>
        <begin position="69"/>
        <end position="81"/>
    </location>
</feature>
<feature type="turn" evidence="18">
    <location>
        <begin position="82"/>
        <end position="84"/>
    </location>
</feature>
<feature type="helix" evidence="18">
    <location>
        <begin position="85"/>
        <end position="88"/>
    </location>
</feature>
<feature type="helix" evidence="18">
    <location>
        <begin position="97"/>
        <end position="99"/>
    </location>
</feature>
<feature type="helix" evidence="18">
    <location>
        <begin position="101"/>
        <end position="103"/>
    </location>
</feature>
<feature type="helix" evidence="18">
    <location>
        <begin position="105"/>
        <end position="119"/>
    </location>
</feature>
<feature type="strand" evidence="18">
    <location>
        <begin position="122"/>
        <end position="124"/>
    </location>
</feature>
<feature type="strand" evidence="18">
    <location>
        <begin position="127"/>
        <end position="135"/>
    </location>
</feature>
<feature type="helix" evidence="18">
    <location>
        <begin position="140"/>
        <end position="158"/>
    </location>
</feature>
<feature type="turn" evidence="18">
    <location>
        <begin position="159"/>
        <end position="161"/>
    </location>
</feature>
<feature type="strand" evidence="18">
    <location>
        <begin position="163"/>
        <end position="171"/>
    </location>
</feature>
<feature type="strand" evidence="18">
    <location>
        <begin position="173"/>
        <end position="186"/>
    </location>
</feature>
<feature type="helix" evidence="18">
    <location>
        <begin position="189"/>
        <end position="193"/>
    </location>
</feature>
<feature type="helix" evidence="18">
    <location>
        <begin position="194"/>
        <end position="196"/>
    </location>
</feature>
<feature type="strand" evidence="18">
    <location>
        <begin position="198"/>
        <end position="205"/>
    </location>
</feature>
<feature type="strand" evidence="18">
    <location>
        <begin position="209"/>
        <end position="211"/>
    </location>
</feature>
<feature type="strand" evidence="18">
    <location>
        <begin position="214"/>
        <end position="226"/>
    </location>
</feature>
<feature type="strand" evidence="18">
    <location>
        <begin position="229"/>
        <end position="232"/>
    </location>
</feature>
<feature type="helix" evidence="18">
    <location>
        <begin position="237"/>
        <end position="239"/>
    </location>
</feature>
<feature type="strand" evidence="18">
    <location>
        <begin position="240"/>
        <end position="245"/>
    </location>
</feature>
<feature type="helix" evidence="18">
    <location>
        <begin position="255"/>
        <end position="257"/>
    </location>
</feature>
<feature type="strand" evidence="18">
    <location>
        <begin position="260"/>
        <end position="266"/>
    </location>
</feature>
<feature type="turn" evidence="18">
    <location>
        <begin position="267"/>
        <end position="269"/>
    </location>
</feature>
<feature type="strand" evidence="18">
    <location>
        <begin position="272"/>
        <end position="275"/>
    </location>
</feature>
<feature type="strand" evidence="18">
    <location>
        <begin position="277"/>
        <end position="279"/>
    </location>
</feature>
<feature type="helix" evidence="18">
    <location>
        <begin position="281"/>
        <end position="307"/>
    </location>
</feature>
<feature type="turn" evidence="18">
    <location>
        <begin position="308"/>
        <end position="312"/>
    </location>
</feature>
<feature type="strand" evidence="18">
    <location>
        <begin position="324"/>
        <end position="328"/>
    </location>
</feature>
<feature type="helix" evidence="18">
    <location>
        <begin position="329"/>
        <end position="331"/>
    </location>
</feature>
<feature type="strand" evidence="18">
    <location>
        <begin position="333"/>
        <end position="336"/>
    </location>
</feature>
<feature type="turn" evidence="18">
    <location>
        <begin position="337"/>
        <end position="339"/>
    </location>
</feature>
<feature type="strand" evidence="18">
    <location>
        <begin position="342"/>
        <end position="344"/>
    </location>
</feature>
<feature type="helix" evidence="18">
    <location>
        <begin position="346"/>
        <end position="349"/>
    </location>
</feature>
<feature type="turn" evidence="18">
    <location>
        <begin position="350"/>
        <end position="352"/>
    </location>
</feature>
<feature type="helix" evidence="18">
    <location>
        <begin position="355"/>
        <end position="366"/>
    </location>
</feature>
<gene>
    <name type="primary">prfB</name>
    <name type="ordered locus">TTHA0142</name>
</gene>
<proteinExistence type="evidence at protein level"/>
<protein>
    <recommendedName>
        <fullName>Peptide chain release factor RF2</fullName>
    </recommendedName>
</protein>
<comment type="function">
    <text evidence="1 4 5 6 7 8 12">Peptide chain release factor 2 directs the termination of translation in response to the peptide chain termination codons UGA and UAA (Probable). In endogenous ribosomes interacts with P-site tRNA and 23S rRNA (PubMed:18988853, PubMed:20421507). In the presence of truncated mRNA in the 70S ribosome, ArfA and RF2 interact such that the GGQ peptide hydrolysis motif of RF2 rises into the peptidyl-transferase center and releases the ribosome (By similarity). Recruited to stalled E.coli 70S ribosomes by E.coli ArfA, but cannot be functionally accomodated in the peptidyl-transferase center (PubMed:27934701, PubMed:28077875). Note T.thermophilus probably does not encode arfA (Ref.1).</text>
</comment>
<comment type="subunit">
    <text evidence="2 3 4 5 7 10">Interacts with the ribosome (PubMed:16377566, PubMed:17272297, PubMed:18988853, PubMed:20421507). Interacts with ribosomal protein L11 (PubMed:18988853). Recruited to stalled E.coli ribosomes by E.coli ArfA (PubMed:27934701, PubMed:28077875).</text>
</comment>
<comment type="subcellular location">
    <subcellularLocation>
        <location evidence="9">Cytoplasm</location>
    </subcellularLocation>
</comment>
<comment type="similarity">
    <text>Belongs to the prokaryotic/mitochondrial release factor family.</text>
</comment>
<reference key="1">
    <citation type="submission" date="2004-11" db="EMBL/GenBank/DDBJ databases">
        <title>Complete genome sequence of Thermus thermophilus HB8.</title>
        <authorList>
            <person name="Masui R."/>
            <person name="Kurokawa K."/>
            <person name="Nakagawa N."/>
            <person name="Tokunaga F."/>
            <person name="Koyama Y."/>
            <person name="Shibata T."/>
            <person name="Oshima T."/>
            <person name="Yokoyama S."/>
            <person name="Yasunaga T."/>
            <person name="Kuramitsu S."/>
        </authorList>
    </citation>
    <scope>NUCLEOTIDE SEQUENCE [LARGE SCALE GENOMIC DNA]</scope>
    <source>
        <strain>ATCC 27634 / DSM 579 / HB8</strain>
    </source>
</reference>
<reference key="2">
    <citation type="journal article" date="2017" name="Nature">
        <title>Structural basis of co-translational quality control by ArfA and RF2 bound to ribosome.</title>
        <authorList>
            <person name="Zeng F."/>
            <person name="Chen Y."/>
            <person name="Remis J."/>
            <person name="Shekhar M."/>
            <person name="Phillips J.C."/>
            <person name="Tajkhorshid E."/>
            <person name="Jin H."/>
        </authorList>
    </citation>
    <scope>INTERACTION WITH E.COLI RIBOSOME</scope>
    <scope>LACK OF FUNCTION IN E.COLI</scope>
    <scope>METHYLATION AT GLN-253</scope>
</reference>
<reference evidence="14" key="3">
    <citation type="journal article" date="2005" name="Cell">
        <title>Crystal structures of the ribosome in complex with release factors RF1 and RF2 bound to a cognate stop codon.</title>
        <authorList>
            <person name="Petry S."/>
            <person name="Brodersen D.E."/>
            <person name="Murphy F.V."/>
            <person name="Dunham C.M."/>
            <person name="Selmer M."/>
            <person name="Tarry M.J."/>
            <person name="Kelley A.C."/>
            <person name="Ramakrishnan V."/>
        </authorList>
    </citation>
    <scope>X-RAY CRYSTALLOGRAPHY (6.76 ANGSTROMS) OF 28-378 IN COMPLEX WITH 70S RIBOSOME</scope>
    <scope>FUNCTION</scope>
    <scope>SUBUNIT</scope>
</reference>
<reference evidence="13" key="4">
    <citation type="journal article" date="2007" name="Nucleic Acids Res.">
        <title>Release factors 2 from Escherichia coli and Thermus thermophilus: structural, spectroscopic and microcalorimetric studies.</title>
        <authorList>
            <person name="Zoldak G."/>
            <person name="Redecke L."/>
            <person name="Svergun D.I."/>
            <person name="Konarev P.V."/>
            <person name="Voertler C.S."/>
            <person name="Dobbek H."/>
            <person name="Sedlak E."/>
            <person name="Sprinzl M."/>
        </authorList>
    </citation>
    <scope>X-RAY CRYSTALLOGRAPHY (2.50 ANGSTROMS) OF 27-378</scope>
    <scope>SUBCELLULAR LOCATION</scope>
</reference>
<reference evidence="15" key="5">
    <citation type="journal article" date="2008" name="Science">
        <title>Insights into translational termination from the structure of RF2 bound to the ribosome.</title>
        <authorList>
            <person name="Weixlbaumer A."/>
            <person name="Jin H."/>
            <person name="Neubauer C."/>
            <person name="Voorhees R.M."/>
            <person name="Petry S."/>
            <person name="Kelley A.C."/>
            <person name="Ramakrishnan V."/>
        </authorList>
    </citation>
    <scope>X-RAY CRYSTALLOGRAPHY (3.45 ANGSTROMS) OF 31-369 IN COMPLEX WITH 70S RIBOSOME</scope>
    <scope>INTERACTION WITH L11</scope>
    <scope>INTERACTION WITH 23S RRNA</scope>
    <scope>SUBUNIT</scope>
</reference>
<reference evidence="16" key="6">
    <citation type="journal article" date="2010" name="Proc. Natl. Acad. Sci. U.S.A.">
        <title>Structure of the 70S ribosome bound to release factor 2 and a substrate analog provides insights into catalysis of peptide release.</title>
        <authorList>
            <person name="Jin H."/>
            <person name="Kelley A.C."/>
            <person name="Loakes D."/>
            <person name="Ramakrishnan V."/>
        </authorList>
    </citation>
    <scope>X-RAY CRYSTALLOGRAPHY (3.10 ANGSTROMS) OF 31-369 IN COMPLEX WITH 70S RIBOSOME</scope>
    <scope>INTERACTION WITH 23S RRNA</scope>
    <scope>SUBUNIT</scope>
</reference>
<reference evidence="17" key="7">
    <citation type="journal article" date="2016" name="Science">
        <title>Translational termination without a stop codon.</title>
        <authorList>
            <person name="James N.R."/>
            <person name="Brown A."/>
            <person name="Gordiyenko Y."/>
            <person name="Ramakrishnan V."/>
        </authorList>
    </citation>
    <scope>STRUCTURE BY ELECTRON MICROSCOPY (3.35 ANGSTROMS) IN COMPLEX WITH E.COLI 70S RIBOSOME AND E.COLI ARFA</scope>
    <scope>FUNCTION</scope>
    <scope>INTERACTION WITH ARFA</scope>
    <source>
        <strain>ATCC 27634 / DSM 579 / HB8</strain>
    </source>
</reference>
<name>RF2_THET8</name>
<evidence type="ECO:0000250" key="1">
    <source>
        <dbReference type="UniProtKB" id="P07012"/>
    </source>
</evidence>
<evidence type="ECO:0000269" key="2">
    <source>
    </source>
</evidence>
<evidence type="ECO:0000269" key="3">
    <source>
    </source>
</evidence>
<evidence type="ECO:0000269" key="4">
    <source>
    </source>
</evidence>
<evidence type="ECO:0000269" key="5">
    <source>
    </source>
</evidence>
<evidence type="ECO:0000269" key="6">
    <source>
    </source>
</evidence>
<evidence type="ECO:0000269" key="7">
    <source>
    </source>
</evidence>
<evidence type="ECO:0000305" key="8">
    <source>
    </source>
</evidence>
<evidence type="ECO:0000305" key="9">
    <source>
    </source>
</evidence>
<evidence type="ECO:0000305" key="10">
    <source>
    </source>
</evidence>
<evidence type="ECO:0000305" key="11">
    <source>
    </source>
</evidence>
<evidence type="ECO:0000305" key="12">
    <source ref="1"/>
</evidence>
<evidence type="ECO:0007744" key="13">
    <source>
        <dbReference type="PDB" id="2IHR"/>
    </source>
</evidence>
<evidence type="ECO:0007744" key="14">
    <source>
        <dbReference type="PDB" id="4V4S"/>
    </source>
</evidence>
<evidence type="ECO:0007744" key="15">
    <source>
        <dbReference type="PDB" id="4V5E"/>
    </source>
</evidence>
<evidence type="ECO:0007744" key="16">
    <source>
        <dbReference type="PDB" id="4V5J"/>
    </source>
</evidence>
<evidence type="ECO:0007744" key="17">
    <source>
        <dbReference type="PDB" id="5MDY"/>
    </source>
</evidence>
<evidence type="ECO:0007829" key="18">
    <source>
        <dbReference type="PDB" id="2IHR"/>
    </source>
</evidence>
<keyword id="KW-0002">3D-structure</keyword>
<keyword id="KW-0963">Cytoplasm</keyword>
<keyword id="KW-0488">Methylation</keyword>
<keyword id="KW-0648">Protein biosynthesis</keyword>
<keyword id="KW-1185">Reference proteome</keyword>
<keyword id="KW-0694">RNA-binding</keyword>
<keyword id="KW-0699">rRNA-binding</keyword>
<keyword id="KW-0820">tRNA-binding</keyword>
<organism>
    <name type="scientific">Thermus thermophilus (strain ATCC 27634 / DSM 579 / HB8)</name>
    <dbReference type="NCBI Taxonomy" id="300852"/>
    <lineage>
        <taxon>Bacteria</taxon>
        <taxon>Thermotogati</taxon>
        <taxon>Deinococcota</taxon>
        <taxon>Deinococci</taxon>
        <taxon>Thermales</taxon>
        <taxon>Thermaceae</taxon>
        <taxon>Thermus</taxon>
    </lineage>
</organism>
<dbReference type="EMBL" id="AP008226">
    <property type="protein sequence ID" value="BAD69965.1"/>
    <property type="molecule type" value="Genomic_DNA"/>
</dbReference>
<dbReference type="RefSeq" id="YP_143408.1">
    <property type="nucleotide sequence ID" value="NC_006461.1"/>
</dbReference>
<dbReference type="PDB" id="2IHR">
    <property type="method" value="X-ray"/>
    <property type="resolution" value="2.50 A"/>
    <property type="chains" value="1=27-378"/>
</dbReference>
<dbReference type="PDB" id="4V4S">
    <property type="method" value="X-ray"/>
    <property type="resolution" value="6.76 A"/>
    <property type="chains" value="AY=28-378"/>
</dbReference>
<dbReference type="PDB" id="4V5E">
    <property type="method" value="X-ray"/>
    <property type="resolution" value="3.45 A"/>
    <property type="chains" value="AY/CY=31-369"/>
</dbReference>
<dbReference type="PDB" id="4V5J">
    <property type="method" value="X-ray"/>
    <property type="resolution" value="3.10 A"/>
    <property type="chains" value="AY/CY=31-369"/>
</dbReference>
<dbReference type="PDB" id="4V67">
    <property type="method" value="X-ray"/>
    <property type="resolution" value="3.00 A"/>
    <property type="chains" value="AX/CX=1-378"/>
</dbReference>
<dbReference type="PDB" id="5MDY">
    <property type="method" value="EM"/>
    <property type="resolution" value="3.35 A"/>
    <property type="chains" value="7=1-378"/>
</dbReference>
<dbReference type="PDB" id="6C5L">
    <property type="method" value="X-ray"/>
    <property type="resolution" value="3.20 A"/>
    <property type="chains" value="AY/CY=28-369"/>
</dbReference>
<dbReference type="PDBsum" id="2IHR"/>
<dbReference type="PDBsum" id="4V4S"/>
<dbReference type="PDBsum" id="4V5E"/>
<dbReference type="PDBsum" id="4V5J"/>
<dbReference type="PDBsum" id="4V67"/>
<dbReference type="PDBsum" id="5MDY"/>
<dbReference type="PDBsum" id="6C5L"/>
<dbReference type="EMDB" id="EMD-3492"/>
<dbReference type="SMR" id="Q5SM01"/>
<dbReference type="IntAct" id="Q5SM01">
    <property type="interactions" value="51"/>
</dbReference>
<dbReference type="iPTMnet" id="Q5SM01"/>
<dbReference type="EnsemblBacteria" id="BAD69965">
    <property type="protein sequence ID" value="BAD69965"/>
    <property type="gene ID" value="BAD69965"/>
</dbReference>
<dbReference type="KEGG" id="ttj:TTHA0142"/>
<dbReference type="PATRIC" id="fig|300852.9.peg.140"/>
<dbReference type="eggNOG" id="COG1186">
    <property type="taxonomic scope" value="Bacteria"/>
</dbReference>
<dbReference type="HOGENOM" id="CLU_036856_6_0_0"/>
<dbReference type="PhylomeDB" id="Q5SM01"/>
<dbReference type="EvolutionaryTrace" id="Q5SM01"/>
<dbReference type="Proteomes" id="UP000000532">
    <property type="component" value="Chromosome"/>
</dbReference>
<dbReference type="GO" id="GO:0005737">
    <property type="term" value="C:cytoplasm"/>
    <property type="evidence" value="ECO:0007669"/>
    <property type="project" value="UniProtKB-SubCell"/>
</dbReference>
<dbReference type="GO" id="GO:0019843">
    <property type="term" value="F:rRNA binding"/>
    <property type="evidence" value="ECO:0007669"/>
    <property type="project" value="UniProtKB-KW"/>
</dbReference>
<dbReference type="GO" id="GO:0016149">
    <property type="term" value="F:translation release factor activity, codon specific"/>
    <property type="evidence" value="ECO:0007669"/>
    <property type="project" value="UniProtKB-UniRule"/>
</dbReference>
<dbReference type="GO" id="GO:0000049">
    <property type="term" value="F:tRNA binding"/>
    <property type="evidence" value="ECO:0007669"/>
    <property type="project" value="UniProtKB-KW"/>
</dbReference>
<dbReference type="FunFam" id="3.30.160.20:FF:000004">
    <property type="entry name" value="Peptide chain release factor 1"/>
    <property type="match status" value="1"/>
</dbReference>
<dbReference type="Gene3D" id="3.30.160.20">
    <property type="match status" value="1"/>
</dbReference>
<dbReference type="Gene3D" id="3.30.70.1660">
    <property type="match status" value="1"/>
</dbReference>
<dbReference type="Gene3D" id="1.20.58.410">
    <property type="entry name" value="Release factor"/>
    <property type="match status" value="1"/>
</dbReference>
<dbReference type="HAMAP" id="MF_00094">
    <property type="entry name" value="Rel_fac_2"/>
    <property type="match status" value="1"/>
</dbReference>
<dbReference type="InterPro" id="IPR005139">
    <property type="entry name" value="PCRF"/>
</dbReference>
<dbReference type="InterPro" id="IPR000352">
    <property type="entry name" value="Pep_chain_release_fac_I"/>
</dbReference>
<dbReference type="InterPro" id="IPR045853">
    <property type="entry name" value="Pep_chain_release_fac_I_sf"/>
</dbReference>
<dbReference type="InterPro" id="IPR004374">
    <property type="entry name" value="PrfB"/>
</dbReference>
<dbReference type="NCBIfam" id="TIGR00020">
    <property type="entry name" value="prfB"/>
    <property type="match status" value="1"/>
</dbReference>
<dbReference type="PANTHER" id="PTHR43116:SF3">
    <property type="entry name" value="CLASS I PEPTIDE CHAIN RELEASE FACTOR"/>
    <property type="match status" value="1"/>
</dbReference>
<dbReference type="PANTHER" id="PTHR43116">
    <property type="entry name" value="PEPTIDE CHAIN RELEASE FACTOR 2"/>
    <property type="match status" value="1"/>
</dbReference>
<dbReference type="Pfam" id="PF03462">
    <property type="entry name" value="PCRF"/>
    <property type="match status" value="1"/>
</dbReference>
<dbReference type="Pfam" id="PF00472">
    <property type="entry name" value="RF-1"/>
    <property type="match status" value="1"/>
</dbReference>
<dbReference type="SMART" id="SM00937">
    <property type="entry name" value="PCRF"/>
    <property type="match status" value="1"/>
</dbReference>
<dbReference type="SUPFAM" id="SSF75620">
    <property type="entry name" value="Release factor"/>
    <property type="match status" value="1"/>
</dbReference>
<dbReference type="PROSITE" id="PS00745">
    <property type="entry name" value="RF_PROK_I"/>
    <property type="match status" value="1"/>
</dbReference>
<accession>Q5SM01</accession>